<sequence>MTTETGTWTVKKGLAEMLKGGVIMDVTTPEQAKIAEEAGACAVMALERVPADIRAAGGVARMADPTVILRIMDAVTIPVMAKARIGHFVEAQVLESLGIDYIDESEVLTPADDLFHINKNDFKVPFVCGARNLGEALRRIGEGAAMIRTKGEPGTGNVVEAVRHARQVMSEIRKLTTLPKEERMSFAKEIGAPYELVCLVAETGRLPVVNFAAGGIATPADAALMMQLGVDGVFVGSGIFKSGDPIRRAKAIVAATTHYNDPKVIAEVSKDLGEPMVGIEIPTIPAEQRMQERGW</sequence>
<proteinExistence type="inferred from homology"/>
<comment type="function">
    <text evidence="1">Catalyzes the formation of pyridoxal 5'-phosphate from ribose 5-phosphate (RBP), glyceraldehyde 3-phosphate (G3P) and ammonia. The ammonia is provided by the PdxT subunit. Can also use ribulose 5-phosphate and dihydroxyacetone phosphate as substrates, resulting from enzyme-catalyzed isomerization of RBP and G3P, respectively.</text>
</comment>
<comment type="catalytic activity">
    <reaction evidence="1">
        <text>aldehydo-D-ribose 5-phosphate + D-glyceraldehyde 3-phosphate + L-glutamine = pyridoxal 5'-phosphate + L-glutamate + phosphate + 3 H2O + H(+)</text>
        <dbReference type="Rhea" id="RHEA:31507"/>
        <dbReference type="ChEBI" id="CHEBI:15377"/>
        <dbReference type="ChEBI" id="CHEBI:15378"/>
        <dbReference type="ChEBI" id="CHEBI:29985"/>
        <dbReference type="ChEBI" id="CHEBI:43474"/>
        <dbReference type="ChEBI" id="CHEBI:58273"/>
        <dbReference type="ChEBI" id="CHEBI:58359"/>
        <dbReference type="ChEBI" id="CHEBI:59776"/>
        <dbReference type="ChEBI" id="CHEBI:597326"/>
        <dbReference type="EC" id="4.3.3.6"/>
    </reaction>
</comment>
<comment type="pathway">
    <text evidence="1">Cofactor biosynthesis; pyridoxal 5'-phosphate biosynthesis.</text>
</comment>
<comment type="subunit">
    <text evidence="1">In the presence of PdxT, forms a dodecamer of heterodimers.</text>
</comment>
<comment type="similarity">
    <text evidence="1">Belongs to the PdxS/SNZ family.</text>
</comment>
<protein>
    <recommendedName>
        <fullName evidence="1">Pyridoxal 5'-phosphate synthase subunit PdxS</fullName>
        <shortName evidence="1">PLP synthase subunit PdxS</shortName>
        <ecNumber evidence="1">4.3.3.6</ecNumber>
    </recommendedName>
    <alternativeName>
        <fullName evidence="1">Pdx1</fullName>
    </alternativeName>
</protein>
<evidence type="ECO:0000255" key="1">
    <source>
        <dbReference type="HAMAP-Rule" id="MF_01824"/>
    </source>
</evidence>
<accession>B0TAQ4</accession>
<dbReference type="EC" id="4.3.3.6" evidence="1"/>
<dbReference type="EMBL" id="CP000930">
    <property type="protein sequence ID" value="ABZ83706.1"/>
    <property type="molecule type" value="Genomic_DNA"/>
</dbReference>
<dbReference type="RefSeq" id="WP_012282229.1">
    <property type="nucleotide sequence ID" value="NC_010337.2"/>
</dbReference>
<dbReference type="SMR" id="B0TAQ4"/>
<dbReference type="STRING" id="498761.HM1_0855"/>
<dbReference type="KEGG" id="hmo:HM1_0855"/>
<dbReference type="eggNOG" id="COG0214">
    <property type="taxonomic scope" value="Bacteria"/>
</dbReference>
<dbReference type="HOGENOM" id="CLU_055352_1_0_9"/>
<dbReference type="OrthoDB" id="9772545at2"/>
<dbReference type="UniPathway" id="UPA00245"/>
<dbReference type="Proteomes" id="UP000008550">
    <property type="component" value="Chromosome"/>
</dbReference>
<dbReference type="GO" id="GO:0036381">
    <property type="term" value="F:pyridoxal 5'-phosphate synthase (glutamine hydrolysing) activity"/>
    <property type="evidence" value="ECO:0007669"/>
    <property type="project" value="UniProtKB-UniRule"/>
</dbReference>
<dbReference type="GO" id="GO:0006520">
    <property type="term" value="P:amino acid metabolic process"/>
    <property type="evidence" value="ECO:0007669"/>
    <property type="project" value="TreeGrafter"/>
</dbReference>
<dbReference type="GO" id="GO:0042823">
    <property type="term" value="P:pyridoxal phosphate biosynthetic process"/>
    <property type="evidence" value="ECO:0007669"/>
    <property type="project" value="UniProtKB-UniRule"/>
</dbReference>
<dbReference type="GO" id="GO:0008615">
    <property type="term" value="P:pyridoxine biosynthetic process"/>
    <property type="evidence" value="ECO:0007669"/>
    <property type="project" value="TreeGrafter"/>
</dbReference>
<dbReference type="CDD" id="cd04727">
    <property type="entry name" value="pdxS"/>
    <property type="match status" value="1"/>
</dbReference>
<dbReference type="FunFam" id="3.20.20.70:FF:000001">
    <property type="entry name" value="Pyridoxine biosynthesis protein PDX1"/>
    <property type="match status" value="1"/>
</dbReference>
<dbReference type="Gene3D" id="3.20.20.70">
    <property type="entry name" value="Aldolase class I"/>
    <property type="match status" value="1"/>
</dbReference>
<dbReference type="HAMAP" id="MF_01824">
    <property type="entry name" value="PdxS"/>
    <property type="match status" value="1"/>
</dbReference>
<dbReference type="InterPro" id="IPR013785">
    <property type="entry name" value="Aldolase_TIM"/>
</dbReference>
<dbReference type="InterPro" id="IPR001852">
    <property type="entry name" value="PdxS/SNZ"/>
</dbReference>
<dbReference type="InterPro" id="IPR033755">
    <property type="entry name" value="PdxS/SNZ_N"/>
</dbReference>
<dbReference type="InterPro" id="IPR011060">
    <property type="entry name" value="RibuloseP-bd_barrel"/>
</dbReference>
<dbReference type="NCBIfam" id="NF003215">
    <property type="entry name" value="PRK04180.1"/>
    <property type="match status" value="1"/>
</dbReference>
<dbReference type="NCBIfam" id="TIGR00343">
    <property type="entry name" value="pyridoxal 5'-phosphate synthase lyase subunit PdxS"/>
    <property type="match status" value="1"/>
</dbReference>
<dbReference type="PANTHER" id="PTHR31829">
    <property type="entry name" value="PYRIDOXAL 5'-PHOSPHATE SYNTHASE SUBUNIT SNZ1-RELATED"/>
    <property type="match status" value="1"/>
</dbReference>
<dbReference type="PANTHER" id="PTHR31829:SF0">
    <property type="entry name" value="PYRIDOXAL 5'-PHOSPHATE SYNTHASE SUBUNIT SNZ1-RELATED"/>
    <property type="match status" value="1"/>
</dbReference>
<dbReference type="Pfam" id="PF01680">
    <property type="entry name" value="SOR_SNZ"/>
    <property type="match status" value="1"/>
</dbReference>
<dbReference type="PIRSF" id="PIRSF029271">
    <property type="entry name" value="Pdx1"/>
    <property type="match status" value="1"/>
</dbReference>
<dbReference type="SUPFAM" id="SSF51366">
    <property type="entry name" value="Ribulose-phoshate binding barrel"/>
    <property type="match status" value="1"/>
</dbReference>
<dbReference type="PROSITE" id="PS01235">
    <property type="entry name" value="PDXS_SNZ_1"/>
    <property type="match status" value="1"/>
</dbReference>
<dbReference type="PROSITE" id="PS51129">
    <property type="entry name" value="PDXS_SNZ_2"/>
    <property type="match status" value="1"/>
</dbReference>
<organism>
    <name type="scientific">Heliobacterium modesticaldum (strain ATCC 51547 / Ice1)</name>
    <dbReference type="NCBI Taxonomy" id="498761"/>
    <lineage>
        <taxon>Bacteria</taxon>
        <taxon>Bacillati</taxon>
        <taxon>Bacillota</taxon>
        <taxon>Clostridia</taxon>
        <taxon>Eubacteriales</taxon>
        <taxon>Heliobacteriaceae</taxon>
        <taxon>Heliomicrobium</taxon>
    </lineage>
</organism>
<gene>
    <name evidence="1" type="primary">pdxS</name>
    <name type="ordered locus">Helmi_10810</name>
    <name type="ORF">HM1_0855</name>
</gene>
<reference key="1">
    <citation type="journal article" date="2008" name="J. Bacteriol.">
        <title>The genome of Heliobacterium modesticaldum, a phototrophic representative of the Firmicutes containing the simplest photosynthetic apparatus.</title>
        <authorList>
            <person name="Sattley W.M."/>
            <person name="Madigan M.T."/>
            <person name="Swingley W.D."/>
            <person name="Cheung P.C."/>
            <person name="Clocksin K.M."/>
            <person name="Conrad A.L."/>
            <person name="Dejesa L.C."/>
            <person name="Honchak B.M."/>
            <person name="Jung D.O."/>
            <person name="Karbach L.E."/>
            <person name="Kurdoglu A."/>
            <person name="Lahiri S."/>
            <person name="Mastrian S.D."/>
            <person name="Page L.E."/>
            <person name="Taylor H.L."/>
            <person name="Wang Z.T."/>
            <person name="Raymond J."/>
            <person name="Chen M."/>
            <person name="Blankenship R.E."/>
            <person name="Touchman J.W."/>
        </authorList>
    </citation>
    <scope>NUCLEOTIDE SEQUENCE [LARGE SCALE GENOMIC DNA]</scope>
    <source>
        <strain>ATCC 51547 / Ice1</strain>
    </source>
</reference>
<feature type="chain" id="PRO_1000188229" description="Pyridoxal 5'-phosphate synthase subunit PdxS">
    <location>
        <begin position="1"/>
        <end position="295"/>
    </location>
</feature>
<feature type="active site" description="Schiff-base intermediate with D-ribose 5-phosphate" evidence="1">
    <location>
        <position position="82"/>
    </location>
</feature>
<feature type="binding site" evidence="1">
    <location>
        <position position="25"/>
    </location>
    <ligand>
        <name>D-ribose 5-phosphate</name>
        <dbReference type="ChEBI" id="CHEBI:78346"/>
    </ligand>
</feature>
<feature type="binding site" evidence="1">
    <location>
        <position position="154"/>
    </location>
    <ligand>
        <name>D-ribose 5-phosphate</name>
        <dbReference type="ChEBI" id="CHEBI:78346"/>
    </ligand>
</feature>
<feature type="binding site" evidence="1">
    <location>
        <position position="166"/>
    </location>
    <ligand>
        <name>D-glyceraldehyde 3-phosphate</name>
        <dbReference type="ChEBI" id="CHEBI:59776"/>
    </ligand>
</feature>
<feature type="binding site" evidence="1">
    <location>
        <position position="215"/>
    </location>
    <ligand>
        <name>D-ribose 5-phosphate</name>
        <dbReference type="ChEBI" id="CHEBI:78346"/>
    </ligand>
</feature>
<feature type="binding site" evidence="1">
    <location>
        <begin position="236"/>
        <end position="237"/>
    </location>
    <ligand>
        <name>D-ribose 5-phosphate</name>
        <dbReference type="ChEBI" id="CHEBI:78346"/>
    </ligand>
</feature>
<keyword id="KW-0456">Lyase</keyword>
<keyword id="KW-0663">Pyridoxal phosphate</keyword>
<keyword id="KW-1185">Reference proteome</keyword>
<keyword id="KW-0704">Schiff base</keyword>
<name>PDXS_HELMI</name>